<dbReference type="EC" id="1.1.1.255"/>
<dbReference type="EMBL" id="U24561">
    <property type="protein sequence ID" value="AAC15467.1"/>
    <property type="molecule type" value="mRNA"/>
</dbReference>
<dbReference type="EMBL" id="AF067082">
    <property type="protein sequence ID" value="AAC61854.1"/>
    <property type="molecule type" value="Genomic_DNA"/>
</dbReference>
<dbReference type="SMR" id="Q38707"/>
<dbReference type="IntAct" id="Q38707">
    <property type="interactions" value="55"/>
</dbReference>
<dbReference type="KEGG" id="ag:AAC15467"/>
<dbReference type="BioCyc" id="MetaCyc:MONOMER-9261"/>
<dbReference type="BRENDA" id="1.1.1.255">
    <property type="organism ID" value="388"/>
</dbReference>
<dbReference type="GO" id="GO:0005737">
    <property type="term" value="C:cytoplasm"/>
    <property type="evidence" value="ECO:0007669"/>
    <property type="project" value="UniProtKB-SubCell"/>
</dbReference>
<dbReference type="GO" id="GO:0046029">
    <property type="term" value="F:mannitol dehydrogenase activity"/>
    <property type="evidence" value="ECO:0007669"/>
    <property type="project" value="UniProtKB-EC"/>
</dbReference>
<dbReference type="GO" id="GO:0008270">
    <property type="term" value="F:zinc ion binding"/>
    <property type="evidence" value="ECO:0007669"/>
    <property type="project" value="InterPro"/>
</dbReference>
<dbReference type="CDD" id="cd05283">
    <property type="entry name" value="CAD1"/>
    <property type="match status" value="1"/>
</dbReference>
<dbReference type="FunFam" id="3.40.50.720:FF:000022">
    <property type="entry name" value="Cinnamyl alcohol dehydrogenase"/>
    <property type="match status" value="1"/>
</dbReference>
<dbReference type="FunFam" id="3.90.180.10:FF:000004">
    <property type="entry name" value="probable cinnamyl alcohol dehydrogenase"/>
    <property type="match status" value="1"/>
</dbReference>
<dbReference type="FunFam" id="3.90.180.10:FF:000100">
    <property type="entry name" value="Putative cinnamyl alcohol dehydrogenase 6"/>
    <property type="match status" value="1"/>
</dbReference>
<dbReference type="Gene3D" id="3.90.180.10">
    <property type="entry name" value="Medium-chain alcohol dehydrogenases, catalytic domain"/>
    <property type="match status" value="1"/>
</dbReference>
<dbReference type="Gene3D" id="3.40.50.720">
    <property type="entry name" value="NAD(P)-binding Rossmann-like Domain"/>
    <property type="match status" value="1"/>
</dbReference>
<dbReference type="InterPro" id="IPR013149">
    <property type="entry name" value="ADH-like_C"/>
</dbReference>
<dbReference type="InterPro" id="IPR013154">
    <property type="entry name" value="ADH-like_N"/>
</dbReference>
<dbReference type="InterPro" id="IPR002328">
    <property type="entry name" value="ADH_Zn_CS"/>
</dbReference>
<dbReference type="InterPro" id="IPR047109">
    <property type="entry name" value="CAD-like"/>
</dbReference>
<dbReference type="InterPro" id="IPR011032">
    <property type="entry name" value="GroES-like_sf"/>
</dbReference>
<dbReference type="InterPro" id="IPR036291">
    <property type="entry name" value="NAD(P)-bd_dom_sf"/>
</dbReference>
<dbReference type="InterPro" id="IPR020843">
    <property type="entry name" value="PKS_ER"/>
</dbReference>
<dbReference type="PANTHER" id="PTHR42683">
    <property type="entry name" value="ALDEHYDE REDUCTASE"/>
    <property type="match status" value="1"/>
</dbReference>
<dbReference type="Pfam" id="PF08240">
    <property type="entry name" value="ADH_N"/>
    <property type="match status" value="1"/>
</dbReference>
<dbReference type="Pfam" id="PF00107">
    <property type="entry name" value="ADH_zinc_N"/>
    <property type="match status" value="1"/>
</dbReference>
<dbReference type="SMART" id="SM00829">
    <property type="entry name" value="PKS_ER"/>
    <property type="match status" value="1"/>
</dbReference>
<dbReference type="SUPFAM" id="SSF50129">
    <property type="entry name" value="GroES-like"/>
    <property type="match status" value="1"/>
</dbReference>
<dbReference type="SUPFAM" id="SSF51735">
    <property type="entry name" value="NAD(P)-binding Rossmann-fold domains"/>
    <property type="match status" value="1"/>
</dbReference>
<dbReference type="PROSITE" id="PS00059">
    <property type="entry name" value="ADH_ZINC"/>
    <property type="match status" value="1"/>
</dbReference>
<organism>
    <name type="scientific">Apium graveolens</name>
    <name type="common">Celery</name>
    <dbReference type="NCBI Taxonomy" id="4045"/>
    <lineage>
        <taxon>Eukaryota</taxon>
        <taxon>Viridiplantae</taxon>
        <taxon>Streptophyta</taxon>
        <taxon>Embryophyta</taxon>
        <taxon>Tracheophyta</taxon>
        <taxon>Spermatophyta</taxon>
        <taxon>Magnoliopsida</taxon>
        <taxon>eudicotyledons</taxon>
        <taxon>Gunneridae</taxon>
        <taxon>Pentapetalae</taxon>
        <taxon>asterids</taxon>
        <taxon>campanulids</taxon>
        <taxon>Apiales</taxon>
        <taxon>Apiaceae</taxon>
        <taxon>Apioideae</taxon>
        <taxon>apioid superclade</taxon>
        <taxon>Apieae</taxon>
        <taxon>Apium</taxon>
    </lineage>
</organism>
<protein>
    <recommendedName>
        <fullName>Mannitol dehydrogenase</fullName>
        <ecNumber>1.1.1.255</ecNumber>
    </recommendedName>
    <alternativeName>
        <fullName>NAD-dependent mannitol dehydrogenase</fullName>
    </alternativeName>
</protein>
<feature type="chain" id="PRO_0000160807" description="Mannitol dehydrogenase">
    <location>
        <begin position="1"/>
        <end position="365"/>
    </location>
</feature>
<feature type="binding site" evidence="1">
    <location>
        <position position="50"/>
    </location>
    <ligand>
        <name>Zn(2+)</name>
        <dbReference type="ChEBI" id="CHEBI:29105"/>
        <label>1</label>
        <note>catalytic</note>
    </ligand>
</feature>
<feature type="binding site" evidence="1">
    <location>
        <position position="72"/>
    </location>
    <ligand>
        <name>Zn(2+)</name>
        <dbReference type="ChEBI" id="CHEBI:29105"/>
        <label>1</label>
        <note>catalytic</note>
    </ligand>
</feature>
<feature type="binding site" evidence="1">
    <location>
        <position position="103"/>
    </location>
    <ligand>
        <name>Zn(2+)</name>
        <dbReference type="ChEBI" id="CHEBI:29105"/>
        <label>2</label>
    </ligand>
</feature>
<feature type="binding site" evidence="1">
    <location>
        <position position="106"/>
    </location>
    <ligand>
        <name>Zn(2+)</name>
        <dbReference type="ChEBI" id="CHEBI:29105"/>
        <label>2</label>
    </ligand>
</feature>
<feature type="binding site" evidence="1">
    <location>
        <position position="109"/>
    </location>
    <ligand>
        <name>Zn(2+)</name>
        <dbReference type="ChEBI" id="CHEBI:29105"/>
        <label>2</label>
    </ligand>
</feature>
<feature type="binding site" evidence="1">
    <location>
        <position position="117"/>
    </location>
    <ligand>
        <name>Zn(2+)</name>
        <dbReference type="ChEBI" id="CHEBI:29105"/>
        <label>2</label>
    </ligand>
</feature>
<feature type="binding site" evidence="1">
    <location>
        <position position="166"/>
    </location>
    <ligand>
        <name>Zn(2+)</name>
        <dbReference type="ChEBI" id="CHEBI:29105"/>
        <label>1</label>
        <note>catalytic</note>
    </ligand>
</feature>
<feature type="sequence conflict" description="In Ref. 2; AAC61854." evidence="2" ref="2">
    <original>C</original>
    <variation>S</variation>
    <location>
        <position position="47"/>
    </location>
</feature>
<feature type="sequence conflict" description="In Ref. 2; AAC61854." evidence="2" ref="2">
    <original>T</original>
    <variation>I</variation>
    <location>
        <position position="120"/>
    </location>
</feature>
<accession>Q38707</accession>
<accession>O82461</accession>
<sequence>MAKSSEIEHPVKAFGWAARDTTGLLSPFKFSRRATGEKDVRLKVLFCGVCHSDHHMIHNNWGFTTYPIVPGHEIVGVVTEVGSKVEKVKVGDNVGIGCLVGSCRSCESCCDNRESHCENTIDTYGSIYFDGTMTHGGYSDTMVADEHFILRWPKNLPLDSGAPLLCAGITTYSPLKYYGLDKPGTKIGVVGLGGLGHVAVKMAKAFGAQVTVIDISESKRKEALEKLGADSFLLNSDQEQMKGARSSLDGIIDTVPVNHPLAPLFDLLKPNGKLVMVGAPEKPFELPVFSLLKGRKLLGGTINGGIKETQEMLDFAAKHNITADVEVIPMDYVNTAMERLVKSDVRYRFVIDIANTMRTEESLGA</sequence>
<proteinExistence type="evidence at protein level"/>
<comment type="function">
    <text>Oxidizes mannitol to mannose. Provides the initial step by which translocated mannitol is committed to central metabolism and, by regulating mannitol pool size, is important in regulating salt tolerance at the cellular level.</text>
</comment>
<comment type="catalytic activity">
    <reaction>
        <text>D-mannitol + NAD(+) = D-mannose + NADH + H(+)</text>
        <dbReference type="Rhea" id="RHEA:15029"/>
        <dbReference type="ChEBI" id="CHEBI:4208"/>
        <dbReference type="ChEBI" id="CHEBI:15378"/>
        <dbReference type="ChEBI" id="CHEBI:16899"/>
        <dbReference type="ChEBI" id="CHEBI:57540"/>
        <dbReference type="ChEBI" id="CHEBI:57945"/>
        <dbReference type="EC" id="1.1.1.255"/>
    </reaction>
</comment>
<comment type="cofactor">
    <cofactor evidence="1">
        <name>Zn(2+)</name>
        <dbReference type="ChEBI" id="CHEBI:29105"/>
    </cofactor>
    <text evidence="1">Binds 2 Zn(2+) ions per subunit.</text>
</comment>
<comment type="subcellular location">
    <subcellularLocation>
        <location>Cytoplasm</location>
    </subcellularLocation>
</comment>
<comment type="similarity">
    <text evidence="2">Belongs to the zinc-containing alcohol dehydrogenase family.</text>
</comment>
<keyword id="KW-0963">Cytoplasm</keyword>
<keyword id="KW-0479">Metal-binding</keyword>
<keyword id="KW-0520">NAD</keyword>
<keyword id="KW-0560">Oxidoreductase</keyword>
<keyword id="KW-0862">Zinc</keyword>
<reference key="1">
    <citation type="journal article" date="1995" name="Proc. Natl. Acad. Sci. U.S.A.">
        <title>Sequence analysis of a mannitol dehydrogenase cDNA from plants reveals a function for the pathogenesis-related protein ELI3.</title>
        <authorList>
            <person name="Williamson J.D."/>
            <person name="Stoop J.M.H."/>
            <person name="Massel M.O."/>
            <person name="Conkling M.A."/>
            <person name="Pharr D.M."/>
        </authorList>
    </citation>
    <scope>NUCLEOTIDE SEQUENCE [MRNA]</scope>
</reference>
<reference key="2">
    <citation type="online journal article" date="1998" name="Plant Gene Register">
        <title>Cloning and characterization of a genomic clone encoding mannitol dehydrogenase from celery (Apium graveolens).</title>
        <authorList>
            <person name="Williamson J.D."/>
            <person name="Guo W.-W."/>
            <person name="Pharr D.M."/>
        </authorList>
        <locator>PGR98-137</locator>
    </citation>
    <scope>NUCLEOTIDE SEQUENCE [GENOMIC DNA]</scope>
</reference>
<reference key="3">
    <citation type="journal article" date="1996" name="Phytochemistry">
        <title>Substrate specificity of the NAD-dependent mannitol dehydrogenase from celery.</title>
        <authorList>
            <person name="Stoop J.M.H."/>
            <person name="Chilton W.S."/>
            <person name="Pharr D.M."/>
        </authorList>
    </citation>
    <scope>CHARACTERIZATION</scope>
</reference>
<name>MTDH_APIGR</name>
<evidence type="ECO:0000250" key="1"/>
<evidence type="ECO:0000305" key="2"/>
<gene>
    <name type="primary">MTD</name>
</gene>